<accession>P0AB71</accession>
<accession>P11604</accession>
<accession>Q2M9R7</accession>
<name>ALF_ECOLI</name>
<organism>
    <name type="scientific">Escherichia coli (strain K12)</name>
    <dbReference type="NCBI Taxonomy" id="83333"/>
    <lineage>
        <taxon>Bacteria</taxon>
        <taxon>Pseudomonadati</taxon>
        <taxon>Pseudomonadota</taxon>
        <taxon>Gammaproteobacteria</taxon>
        <taxon>Enterobacterales</taxon>
        <taxon>Enterobacteriaceae</taxon>
        <taxon>Escherichia</taxon>
    </lineage>
</organism>
<protein>
    <recommendedName>
        <fullName>Fructose-bisphosphate aldolase class 2</fullName>
        <shortName>FBP aldolase</shortName>
        <shortName>FBPA</shortName>
        <ecNumber evidence="2">4.1.2.13</ecNumber>
    </recommendedName>
    <alternativeName>
        <fullName>Fructose-1,6-bisphosphate aldolase</fullName>
    </alternativeName>
    <alternativeName>
        <fullName>Fructose-bisphosphate aldolase class II</fullName>
    </alternativeName>
    <alternativeName>
        <fullName evidence="14">Sedoheptulose bisphosphate aldolase</fullName>
    </alternativeName>
</protein>
<dbReference type="EC" id="4.1.2.13" evidence="2"/>
<dbReference type="EMBL" id="X14436">
    <property type="protein sequence ID" value="CAA32605.1"/>
    <property type="molecule type" value="Genomic_DNA"/>
</dbReference>
<dbReference type="EMBL" id="U28377">
    <property type="protein sequence ID" value="AAA69092.1"/>
    <property type="molecule type" value="Genomic_DNA"/>
</dbReference>
<dbReference type="EMBL" id="U00096">
    <property type="protein sequence ID" value="AAC75962.1"/>
    <property type="molecule type" value="Genomic_DNA"/>
</dbReference>
<dbReference type="EMBL" id="AP009048">
    <property type="protein sequence ID" value="BAE76989.1"/>
    <property type="molecule type" value="Genomic_DNA"/>
</dbReference>
<dbReference type="PIR" id="S02177">
    <property type="entry name" value="ADEC2A"/>
</dbReference>
<dbReference type="RefSeq" id="NP_417400.1">
    <property type="nucleotide sequence ID" value="NC_000913.3"/>
</dbReference>
<dbReference type="RefSeq" id="WP_000034372.1">
    <property type="nucleotide sequence ID" value="NZ_STEB01000001.1"/>
</dbReference>
<dbReference type="PDB" id="1B57">
    <property type="method" value="X-ray"/>
    <property type="resolution" value="2.00 A"/>
    <property type="chains" value="A/B=2-359"/>
</dbReference>
<dbReference type="PDB" id="1DOS">
    <property type="method" value="X-ray"/>
    <property type="resolution" value="1.67 A"/>
    <property type="chains" value="A/B=2-359"/>
</dbReference>
<dbReference type="PDB" id="1GYN">
    <property type="method" value="X-ray"/>
    <property type="resolution" value="2.00 A"/>
    <property type="chains" value="A=2-359"/>
</dbReference>
<dbReference type="PDB" id="1ZEN">
    <property type="method" value="X-ray"/>
    <property type="resolution" value="2.50 A"/>
    <property type="chains" value="A=2-359"/>
</dbReference>
<dbReference type="PDB" id="5GK3">
    <property type="method" value="X-ray"/>
    <property type="resolution" value="1.80 A"/>
    <property type="chains" value="A/B=1-359"/>
</dbReference>
<dbReference type="PDB" id="5GK4">
    <property type="method" value="X-ray"/>
    <property type="resolution" value="2.00 A"/>
    <property type="chains" value="A/B=1-359"/>
</dbReference>
<dbReference type="PDB" id="5GK5">
    <property type="method" value="X-ray"/>
    <property type="resolution" value="1.90 A"/>
    <property type="chains" value="A/B/C/D/E/F/G/H=1-359"/>
</dbReference>
<dbReference type="PDB" id="5GK6">
    <property type="method" value="X-ray"/>
    <property type="resolution" value="1.80 A"/>
    <property type="chains" value="A/B=1-359"/>
</dbReference>
<dbReference type="PDB" id="5GK7">
    <property type="method" value="X-ray"/>
    <property type="resolution" value="1.80 A"/>
    <property type="chains" value="A/B=1-359"/>
</dbReference>
<dbReference type="PDB" id="5GK8">
    <property type="method" value="X-ray"/>
    <property type="resolution" value="2.00 A"/>
    <property type="chains" value="A/B=1-359"/>
</dbReference>
<dbReference type="PDB" id="5VJD">
    <property type="method" value="X-ray"/>
    <property type="resolution" value="1.70 A"/>
    <property type="chains" value="A/B=2-359"/>
</dbReference>
<dbReference type="PDB" id="5VJE">
    <property type="method" value="X-ray"/>
    <property type="resolution" value="1.65 A"/>
    <property type="chains" value="A/B=2-359"/>
</dbReference>
<dbReference type="PDBsum" id="1B57"/>
<dbReference type="PDBsum" id="1DOS"/>
<dbReference type="PDBsum" id="1GYN"/>
<dbReference type="PDBsum" id="1ZEN"/>
<dbReference type="PDBsum" id="5GK3"/>
<dbReference type="PDBsum" id="5GK4"/>
<dbReference type="PDBsum" id="5GK5"/>
<dbReference type="PDBsum" id="5GK6"/>
<dbReference type="PDBsum" id="5GK7"/>
<dbReference type="PDBsum" id="5GK8"/>
<dbReference type="PDBsum" id="5VJD"/>
<dbReference type="PDBsum" id="5VJE"/>
<dbReference type="SMR" id="P0AB71"/>
<dbReference type="BioGRID" id="4262069">
    <property type="interactions" value="20"/>
</dbReference>
<dbReference type="BioGRID" id="851736">
    <property type="interactions" value="2"/>
</dbReference>
<dbReference type="DIP" id="DIP-31872N"/>
<dbReference type="FunCoup" id="P0AB71">
    <property type="interactions" value="586"/>
</dbReference>
<dbReference type="IntAct" id="P0AB71">
    <property type="interactions" value="7"/>
</dbReference>
<dbReference type="STRING" id="511145.b2925"/>
<dbReference type="BindingDB" id="P0AB71"/>
<dbReference type="ChEMBL" id="CHEMBL4912"/>
<dbReference type="DrugBank" id="DB03026">
    <property type="generic name" value="Phosphoglycolohydroxamic Acid"/>
</dbReference>
<dbReference type="iPTMnet" id="P0AB71"/>
<dbReference type="jPOST" id="P0AB71"/>
<dbReference type="PaxDb" id="511145-b2925"/>
<dbReference type="EnsemblBacteria" id="AAC75962">
    <property type="protein sequence ID" value="AAC75962"/>
    <property type="gene ID" value="b2925"/>
</dbReference>
<dbReference type="GeneID" id="93779073"/>
<dbReference type="GeneID" id="947415"/>
<dbReference type="KEGG" id="ecj:JW2892"/>
<dbReference type="KEGG" id="eco:b2925"/>
<dbReference type="KEGG" id="ecoc:C3026_16025"/>
<dbReference type="PATRIC" id="fig|1411691.4.peg.3807"/>
<dbReference type="EchoBASE" id="EB0278"/>
<dbReference type="eggNOG" id="COG0191">
    <property type="taxonomic scope" value="Bacteria"/>
</dbReference>
<dbReference type="HOGENOM" id="CLU_036923_0_0_6"/>
<dbReference type="InParanoid" id="P0AB71"/>
<dbReference type="OMA" id="HIDFVFH"/>
<dbReference type="OrthoDB" id="9803995at2"/>
<dbReference type="PhylomeDB" id="P0AB71"/>
<dbReference type="BioCyc" id="EcoCyc:FRUCTBISALD-CLASSII-MONOMER"/>
<dbReference type="BioCyc" id="MetaCyc:FRUCTBISALD-CLASSII-MONOMER"/>
<dbReference type="BRENDA" id="4.1.2.13">
    <property type="organism ID" value="2026"/>
</dbReference>
<dbReference type="SABIO-RK" id="P0AB71"/>
<dbReference type="UniPathway" id="UPA00109">
    <property type="reaction ID" value="UER00183"/>
</dbReference>
<dbReference type="EvolutionaryTrace" id="P0AB71"/>
<dbReference type="PRO" id="PR:P0AB71"/>
<dbReference type="Proteomes" id="UP000000625">
    <property type="component" value="Chromosome"/>
</dbReference>
<dbReference type="GO" id="GO:0005829">
    <property type="term" value="C:cytosol"/>
    <property type="evidence" value="ECO:0000314"/>
    <property type="project" value="EcoCyc"/>
</dbReference>
<dbReference type="GO" id="GO:0004332">
    <property type="term" value="F:fructose-bisphosphate aldolase activity"/>
    <property type="evidence" value="ECO:0000314"/>
    <property type="project" value="EcoCyc"/>
</dbReference>
<dbReference type="GO" id="GO:0042802">
    <property type="term" value="F:identical protein binding"/>
    <property type="evidence" value="ECO:0000353"/>
    <property type="project" value="IntAct"/>
</dbReference>
<dbReference type="GO" id="GO:0042803">
    <property type="term" value="F:protein homodimerization activity"/>
    <property type="evidence" value="ECO:0000314"/>
    <property type="project" value="EcoCyc"/>
</dbReference>
<dbReference type="GO" id="GO:0008270">
    <property type="term" value="F:zinc ion binding"/>
    <property type="evidence" value="ECO:0000314"/>
    <property type="project" value="EcoliWiki"/>
</dbReference>
<dbReference type="GO" id="GO:0006094">
    <property type="term" value="P:gluconeogenesis"/>
    <property type="evidence" value="ECO:0000318"/>
    <property type="project" value="GO_Central"/>
</dbReference>
<dbReference type="GO" id="GO:0006096">
    <property type="term" value="P:glycolytic process"/>
    <property type="evidence" value="ECO:0000315"/>
    <property type="project" value="EcoCyc"/>
</dbReference>
<dbReference type="CDD" id="cd00946">
    <property type="entry name" value="FBP_aldolase_IIA"/>
    <property type="match status" value="1"/>
</dbReference>
<dbReference type="FunFam" id="3.20.20.70:FF:000013">
    <property type="entry name" value="Class II fructose-bisphosphate aldolase"/>
    <property type="match status" value="1"/>
</dbReference>
<dbReference type="Gene3D" id="3.20.20.70">
    <property type="entry name" value="Aldolase class I"/>
    <property type="match status" value="1"/>
</dbReference>
<dbReference type="InterPro" id="IPR013785">
    <property type="entry name" value="Aldolase_TIM"/>
</dbReference>
<dbReference type="InterPro" id="IPR000771">
    <property type="entry name" value="FBA_II"/>
</dbReference>
<dbReference type="InterPro" id="IPR006411">
    <property type="entry name" value="Fruct_bisP_bact"/>
</dbReference>
<dbReference type="NCBIfam" id="TIGR00167">
    <property type="entry name" value="cbbA"/>
    <property type="match status" value="1"/>
</dbReference>
<dbReference type="NCBIfam" id="TIGR01520">
    <property type="entry name" value="FruBisAldo_II_A"/>
    <property type="match status" value="1"/>
</dbReference>
<dbReference type="NCBIfam" id="NF006628">
    <property type="entry name" value="PRK09197.1"/>
    <property type="match status" value="1"/>
</dbReference>
<dbReference type="PANTHER" id="PTHR30559:SF0">
    <property type="entry name" value="FRUCTOSE-BISPHOSPHATE ALDOLASE"/>
    <property type="match status" value="1"/>
</dbReference>
<dbReference type="PANTHER" id="PTHR30559">
    <property type="entry name" value="FRUCTOSE-BISPHOSPHATE ALDOLASE CLASS 2"/>
    <property type="match status" value="1"/>
</dbReference>
<dbReference type="Pfam" id="PF01116">
    <property type="entry name" value="F_bP_aldolase"/>
    <property type="match status" value="1"/>
</dbReference>
<dbReference type="PIRSF" id="PIRSF001359">
    <property type="entry name" value="F_bP_aldolase_II"/>
    <property type="match status" value="1"/>
</dbReference>
<dbReference type="SUPFAM" id="SSF51569">
    <property type="entry name" value="Aldolase"/>
    <property type="match status" value="1"/>
</dbReference>
<dbReference type="PROSITE" id="PS00602">
    <property type="entry name" value="ALDOLASE_CLASS_II_1"/>
    <property type="match status" value="1"/>
</dbReference>
<dbReference type="PROSITE" id="PS00806">
    <property type="entry name" value="ALDOLASE_CLASS_II_2"/>
    <property type="match status" value="1"/>
</dbReference>
<evidence type="ECO:0000269" key="1">
    <source>
    </source>
</evidence>
<evidence type="ECO:0000269" key="2">
    <source>
    </source>
</evidence>
<evidence type="ECO:0000269" key="3">
    <source>
    </source>
</evidence>
<evidence type="ECO:0000269" key="4">
    <source>
    </source>
</evidence>
<evidence type="ECO:0000269" key="5">
    <source>
    </source>
</evidence>
<evidence type="ECO:0000269" key="6">
    <source>
    </source>
</evidence>
<evidence type="ECO:0000269" key="7">
    <source>
    </source>
</evidence>
<evidence type="ECO:0000269" key="8">
    <source>
    </source>
</evidence>
<evidence type="ECO:0000269" key="9">
    <source>
    </source>
</evidence>
<evidence type="ECO:0000269" key="10">
    <source>
    </source>
</evidence>
<evidence type="ECO:0000269" key="11">
    <source>
    </source>
</evidence>
<evidence type="ECO:0000269" key="12">
    <source>
    </source>
</evidence>
<evidence type="ECO:0000269" key="13">
    <source>
    </source>
</evidence>
<evidence type="ECO:0000305" key="14"/>
<evidence type="ECO:0007829" key="15">
    <source>
        <dbReference type="PDB" id="1ZEN"/>
    </source>
</evidence>
<evidence type="ECO:0007829" key="16">
    <source>
        <dbReference type="PDB" id="5VJD"/>
    </source>
</evidence>
<evidence type="ECO:0007829" key="17">
    <source>
        <dbReference type="PDB" id="5VJE"/>
    </source>
</evidence>
<proteinExistence type="evidence at protein level"/>
<keyword id="KW-0002">3D-structure</keyword>
<keyword id="KW-0007">Acetylation</keyword>
<keyword id="KW-0903">Direct protein sequencing</keyword>
<keyword id="KW-0324">Glycolysis</keyword>
<keyword id="KW-0456">Lyase</keyword>
<keyword id="KW-0479">Metal-binding</keyword>
<keyword id="KW-1185">Reference proteome</keyword>
<keyword id="KW-0862">Zinc</keyword>
<gene>
    <name type="primary">fbaA</name>
    <name type="synonym">fba</name>
    <name type="synonym">fda</name>
    <name type="ordered locus">b2925</name>
    <name type="ordered locus">JW2892</name>
</gene>
<comment type="function">
    <text evidence="2 5">Catalyzes the aldol condensation of dihydroxyacetone phosphate (DHAP or glycerone-phosphate) with glyceraldehyde 3-phosphate (G3P) to form fructose 1,6-bisphosphate (FBP) in gluconeogenesis and the reverse reaction in glycolysis (PubMed:10712619). In addition, is involved in the utilization of D-sedoheptulose 7-phosphate, an intermediate of the pentose phosphate pathway, via the sedoheptulose bisphosphate bypass pathway (PubMed:19756045). Catalyzes the cleavage of D-sedoheptulose 1,7-bisphosphate to glyceraldehyde 3-phosphate and erythrose 4-phosphate (PubMed:19756045).</text>
</comment>
<comment type="catalytic activity">
    <reaction evidence="2">
        <text>beta-D-fructose 1,6-bisphosphate = D-glyceraldehyde 3-phosphate + dihydroxyacetone phosphate</text>
        <dbReference type="Rhea" id="RHEA:14729"/>
        <dbReference type="ChEBI" id="CHEBI:32966"/>
        <dbReference type="ChEBI" id="CHEBI:57642"/>
        <dbReference type="ChEBI" id="CHEBI:59776"/>
        <dbReference type="EC" id="4.1.2.13"/>
    </reaction>
</comment>
<comment type="catalytic activity">
    <reaction evidence="5">
        <text>D-erythrose 4-phosphate + dihydroxyacetone phosphate = D-sedoheptulose 1,7-bisphosphate</text>
        <dbReference type="Rhea" id="RHEA:30167"/>
        <dbReference type="ChEBI" id="CHEBI:16897"/>
        <dbReference type="ChEBI" id="CHEBI:57642"/>
        <dbReference type="ChEBI" id="CHEBI:58335"/>
    </reaction>
    <physiologicalReaction direction="right-to-left" evidence="5">
        <dbReference type="Rhea" id="RHEA:30169"/>
    </physiologicalReaction>
</comment>
<comment type="cofactor">
    <cofactor evidence="1 10 11">
        <name>Zn(2+)</name>
        <dbReference type="ChEBI" id="CHEBI:29105"/>
    </cofactor>
    <text evidence="1 10 11">Binds 2 Zn(2+) ions per subunit. One is catalytic and the other provides a structural contribution.</text>
</comment>
<comment type="biophysicochemical properties">
    <kinetics>
        <KM evidence="2">0.17 mM for fructose-1,6-bisphosphate</KM>
        <KM evidence="2">0.35 mM for tagatose-1,6-bisphosphate</KM>
        <text>The catalytic efficiency measured with fructose-1,6-bisphosphate as substrate is 1440-fold higher than that with tagatose-1,6-bisphosphate.</text>
    </kinetics>
</comment>
<comment type="pathway">
    <text>Carbohydrate degradation; glycolysis; D-glyceraldehyde 3-phosphate and glycerone phosphate from D-glucose: step 4/4.</text>
</comment>
<comment type="subunit">
    <text evidence="1 3 10 11">Homodimer.</text>
</comment>
<comment type="interaction">
    <interactant intactId="EBI-370916">
        <id>P0AB71</id>
    </interactant>
    <interactant intactId="EBI-542092">
        <id>P0A6Y8</id>
        <label>dnaK</label>
    </interactant>
    <organismsDiffer>false</organismsDiffer>
    <experiments>3</experiments>
</comment>
<comment type="interaction">
    <interactant intactId="EBI-370916">
        <id>P0AB71</id>
    </interactant>
    <interactant intactId="EBI-370916">
        <id>P0AB71</id>
        <label>fbaA</label>
    </interactant>
    <organismsDiffer>false</organismsDiffer>
    <experiments>4</experiments>
</comment>
<comment type="similarity">
    <text evidence="14">Belongs to the class II fructose-bisphosphate aldolase family.</text>
</comment>
<feature type="initiator methionine" description="Removed" evidence="8 12 13">
    <location>
        <position position="1"/>
    </location>
</feature>
<feature type="chain" id="PRO_0000178713" description="Fructose-bisphosphate aldolase class 2">
    <location>
        <begin position="2"/>
        <end position="359"/>
    </location>
</feature>
<feature type="active site" description="Proton donor" evidence="1">
    <location>
        <position position="110"/>
    </location>
</feature>
<feature type="binding site" evidence="14">
    <location>
        <position position="62"/>
    </location>
    <ligand>
        <name>D-glyceraldehyde 3-phosphate</name>
        <dbReference type="ChEBI" id="CHEBI:59776"/>
    </ligand>
</feature>
<feature type="binding site" evidence="1 10 11">
    <location>
        <position position="111"/>
    </location>
    <ligand>
        <name>Zn(2+)</name>
        <dbReference type="ChEBI" id="CHEBI:29105"/>
        <label>1</label>
        <note>catalytic</note>
    </ligand>
</feature>
<feature type="binding site" evidence="1 10 11">
    <location>
        <position position="145"/>
    </location>
    <ligand>
        <name>Zn(2+)</name>
        <dbReference type="ChEBI" id="CHEBI:29105"/>
        <label>2</label>
    </ligand>
</feature>
<feature type="binding site" evidence="1 10 11">
    <location>
        <position position="175"/>
    </location>
    <ligand>
        <name>Zn(2+)</name>
        <dbReference type="ChEBI" id="CHEBI:29105"/>
        <label>2</label>
    </ligand>
</feature>
<feature type="binding site" evidence="1 10 11">
    <location>
        <position position="227"/>
    </location>
    <ligand>
        <name>Zn(2+)</name>
        <dbReference type="ChEBI" id="CHEBI:29105"/>
        <label>1</label>
        <note>catalytic</note>
    </ligand>
</feature>
<feature type="binding site">
    <location>
        <position position="228"/>
    </location>
    <ligand>
        <name>dihydroxyacetone phosphate</name>
        <dbReference type="ChEBI" id="CHEBI:57642"/>
    </ligand>
</feature>
<feature type="binding site" evidence="1 10 11">
    <location>
        <position position="265"/>
    </location>
    <ligand>
        <name>Zn(2+)</name>
        <dbReference type="ChEBI" id="CHEBI:29105"/>
        <label>1</label>
        <note>catalytic</note>
    </ligand>
</feature>
<feature type="binding site">
    <location>
        <begin position="266"/>
        <end position="268"/>
    </location>
    <ligand>
        <name>dihydroxyacetone phosphate</name>
        <dbReference type="ChEBI" id="CHEBI:57642"/>
    </ligand>
</feature>
<feature type="binding site">
    <location>
        <begin position="287"/>
        <end position="290"/>
    </location>
    <ligand>
        <name>dihydroxyacetone phosphate</name>
        <dbReference type="ChEBI" id="CHEBI:57642"/>
    </ligand>
</feature>
<feature type="modified residue" description="N6-acetyllysine; alternate" evidence="4">
    <location>
        <position position="9"/>
    </location>
</feature>
<feature type="modified residue" description="N6-malonyllysine; alternate" evidence="7">
    <location>
        <position position="9"/>
    </location>
</feature>
<feature type="modified residue" description="N6-succinyllysine; alternate" evidence="6">
    <location>
        <position position="9"/>
    </location>
</feature>
<feature type="modified residue" description="N6-succinyllysine" evidence="6">
    <location>
        <position position="72"/>
    </location>
</feature>
<feature type="modified residue" description="N6-succinyllysine" evidence="6">
    <location>
        <position position="115"/>
    </location>
</feature>
<feature type="modified residue" description="N6-succinyllysine" evidence="6">
    <location>
        <position position="231"/>
    </location>
</feature>
<feature type="modified residue" description="N6-succinyllysine" evidence="6">
    <location>
        <position position="251"/>
    </location>
</feature>
<feature type="modified residue" description="N6-succinyllysine" evidence="6">
    <location>
        <position position="319"/>
    </location>
</feature>
<feature type="modified residue" description="N6-succinyllysine" evidence="6">
    <location>
        <position position="326"/>
    </location>
</feature>
<feature type="modified residue" description="N6-succinyllysine" evidence="6">
    <location>
        <position position="348"/>
    </location>
</feature>
<feature type="mutagenesis site" description="1.5% of wild-type activity. 5-fold decrease in FBP affinity." evidence="2">
    <original>N</original>
    <variation>A</variation>
    <location>
        <position position="36"/>
    </location>
</feature>
<feature type="mutagenesis site" description="81% of wild-type activity. 1.3-fold decrease in FBP affinity." evidence="2">
    <original>Q</original>
    <variation>A</variation>
    <location>
        <position position="60"/>
    </location>
</feature>
<feature type="mutagenesis site" description="8% of wild-type activity. 16-fold decrease in FBP affinity." evidence="2">
    <original>S</original>
    <variation>A</variation>
    <location>
        <position position="62"/>
    </location>
</feature>
<feature type="mutagenesis site" description="60% of wild-type activity. 2.5-fold decrease in FBP affinity." evidence="2">
    <original>S</original>
    <variation>T</variation>
    <location>
        <position position="62"/>
    </location>
</feature>
<feature type="mutagenesis site" description="Loss of activity." evidence="9">
    <original>H</original>
    <variation>A</variation>
    <location>
        <position position="108"/>
    </location>
</feature>
<feature type="mutagenesis site" description="Loss of activity." evidence="9">
    <original>H</original>
    <variation>A</variation>
    <location>
        <position position="111"/>
    </location>
</feature>
<feature type="mutagenesis site" description="Partial loss of activity." evidence="9">
    <original>C</original>
    <variation>A</variation>
    <location>
        <position position="112"/>
    </location>
</feature>
<feature type="mutagenesis site" description="6% of wild-type activity. 2.2-fold decrease in FBP affinity." evidence="2">
    <original>K</original>
    <variation>A</variation>
    <location>
        <position position="326"/>
    </location>
</feature>
<feature type="helix" evidence="17">
    <location>
        <begin position="4"/>
        <end position="7"/>
    </location>
</feature>
<feature type="strand" evidence="17">
    <location>
        <begin position="10"/>
        <end position="12"/>
    </location>
</feature>
<feature type="helix" evidence="17">
    <location>
        <begin position="16"/>
        <end position="27"/>
    </location>
</feature>
<feature type="strand" evidence="17">
    <location>
        <begin position="32"/>
        <end position="36"/>
    </location>
</feature>
<feature type="helix" evidence="17">
    <location>
        <begin position="40"/>
        <end position="53"/>
    </location>
</feature>
<feature type="strand" evidence="17">
    <location>
        <begin position="57"/>
        <end position="61"/>
    </location>
</feature>
<feature type="helix" evidence="17">
    <location>
        <begin position="63"/>
        <end position="70"/>
    </location>
</feature>
<feature type="helix" evidence="17">
    <location>
        <begin position="81"/>
        <end position="97"/>
    </location>
</feature>
<feature type="helix" evidence="17">
    <location>
        <begin position="98"/>
        <end position="101"/>
    </location>
</feature>
<feature type="strand" evidence="17">
    <location>
        <begin position="104"/>
        <end position="109"/>
    </location>
</feature>
<feature type="helix" evidence="17">
    <location>
        <begin position="114"/>
        <end position="116"/>
    </location>
</feature>
<feature type="helix" evidence="17">
    <location>
        <begin position="117"/>
        <end position="134"/>
    </location>
</feature>
<feature type="strand" evidence="17">
    <location>
        <begin position="140"/>
        <end position="144"/>
    </location>
</feature>
<feature type="helix" evidence="17">
    <location>
        <begin position="151"/>
        <end position="166"/>
    </location>
</feature>
<feature type="turn" evidence="17">
    <location>
        <begin position="167"/>
        <end position="169"/>
    </location>
</feature>
<feature type="strand" evidence="17">
    <location>
        <begin position="171"/>
        <end position="176"/>
    </location>
</feature>
<feature type="helix" evidence="17">
    <location>
        <begin position="200"/>
        <end position="211"/>
    </location>
</feature>
<feature type="strand" evidence="17">
    <location>
        <begin position="217"/>
        <end position="221"/>
    </location>
</feature>
<feature type="strand" evidence="16">
    <location>
        <begin position="226"/>
        <end position="228"/>
    </location>
</feature>
<feature type="helix" evidence="15">
    <location>
        <begin position="232"/>
        <end position="234"/>
    </location>
</feature>
<feature type="helix" evidence="17">
    <location>
        <begin position="240"/>
        <end position="253"/>
    </location>
</feature>
<feature type="strand" evidence="17">
    <location>
        <begin position="262"/>
        <end position="264"/>
    </location>
</feature>
<feature type="helix" evidence="17">
    <location>
        <begin position="272"/>
        <end position="280"/>
    </location>
</feature>
<feature type="strand" evidence="17">
    <location>
        <begin position="283"/>
        <end position="288"/>
    </location>
</feature>
<feature type="helix" evidence="17">
    <location>
        <begin position="290"/>
        <end position="306"/>
    </location>
</feature>
<feature type="helix" evidence="17">
    <location>
        <begin position="307"/>
        <end position="310"/>
    </location>
</feature>
<feature type="strand" evidence="17">
    <location>
        <begin position="311"/>
        <end position="317"/>
    </location>
</feature>
<feature type="strand" evidence="17">
    <location>
        <begin position="320"/>
        <end position="324"/>
    </location>
</feature>
<feature type="helix" evidence="17">
    <location>
        <begin position="326"/>
        <end position="329"/>
    </location>
</feature>
<feature type="helix" evidence="17">
    <location>
        <begin position="331"/>
        <end position="352"/>
    </location>
</feature>
<sequence>MSKIFDFVKPGVITGDDVQKVFQVAKENNFALPAVNCVGTDSINAVLETAAKVKAPVIVQFSNGGASFIAGKGVKSDVPQGAAILGAISGAHHVHQMAEHYGVPVILHTDHCAKKLLPWIDGLLDAGEKHFAATGKPLFSSHMIDLSEESLQENIEICSKYLERMSKIGMTLEIELGCTGGEEDGVDNSHMDASALYTQPEDVDYAYTELSKISPRFTIAASFGNVHGVYKPGNVVLTPTILRDSQEYVSKKHNLPHNSLNFVFHGGSGSTAQEIKDSVSYGVVKMNIDTDTQWATWEGVLNYYKANEAYLQGQLGNPKGEDQPNKKYYDPRVWLRAGQTSMIARLEKAFQELNAIDVL</sequence>
<reference key="1">
    <citation type="journal article" date="1989" name="Mol. Microbiol.">
        <title>Identification, molecular cloning and sequence analysis of a gene cluster encoding the class II fructose 1,6-bisphosphate aldolase, 3-phosphoglycerate kinase and a putative second glyceraldehyde 3-phosphate dehydrogenase of Escherichia coli.</title>
        <authorList>
            <person name="Alefounder P.R."/>
            <person name="Perham R.N."/>
        </authorList>
    </citation>
    <scope>NUCLEOTIDE SEQUENCE [GENOMIC DNA]</scope>
    <source>
        <strain>K12 / CS520</strain>
    </source>
</reference>
<reference key="2">
    <citation type="journal article" date="1989" name="Biochem. J.">
        <title>Cloning, sequence analysis and over-expression of the gene for the class II fructose 1,6-bisphosphate aldolase of Escherichia coli.</title>
        <authorList>
            <person name="Alefounder P.R."/>
            <person name="Baldwin S.A."/>
            <person name="Perham R.N."/>
            <person name="Short N.J."/>
        </authorList>
    </citation>
    <scope>NUCLEOTIDE SEQUENCE [GENOMIC DNA]</scope>
    <scope>PROTEIN SEQUENCE OF 2-27</scope>
</reference>
<reference key="3">
    <citation type="journal article" date="1997" name="Science">
        <title>The complete genome sequence of Escherichia coli K-12.</title>
        <authorList>
            <person name="Blattner F.R."/>
            <person name="Plunkett G. III"/>
            <person name="Bloch C.A."/>
            <person name="Perna N.T."/>
            <person name="Burland V."/>
            <person name="Riley M."/>
            <person name="Collado-Vides J."/>
            <person name="Glasner J.D."/>
            <person name="Rode C.K."/>
            <person name="Mayhew G.F."/>
            <person name="Gregor J."/>
            <person name="Davis N.W."/>
            <person name="Kirkpatrick H.A."/>
            <person name="Goeden M.A."/>
            <person name="Rose D.J."/>
            <person name="Mau B."/>
            <person name="Shao Y."/>
        </authorList>
    </citation>
    <scope>NUCLEOTIDE SEQUENCE [LARGE SCALE GENOMIC DNA]</scope>
    <source>
        <strain>K12 / MG1655 / ATCC 47076</strain>
    </source>
</reference>
<reference key="4">
    <citation type="journal article" date="2006" name="Mol. Syst. Biol.">
        <title>Highly accurate genome sequences of Escherichia coli K-12 strains MG1655 and W3110.</title>
        <authorList>
            <person name="Hayashi K."/>
            <person name="Morooka N."/>
            <person name="Yamamoto Y."/>
            <person name="Fujita K."/>
            <person name="Isono K."/>
            <person name="Choi S."/>
            <person name="Ohtsubo E."/>
            <person name="Baba T."/>
            <person name="Wanner B.L."/>
            <person name="Mori H."/>
            <person name="Horiuchi T."/>
        </authorList>
    </citation>
    <scope>NUCLEOTIDE SEQUENCE [LARGE SCALE GENOMIC DNA]</scope>
    <source>
        <strain>K12 / W3110 / ATCC 27325 / DSM 5911</strain>
    </source>
</reference>
<reference key="5">
    <citation type="journal article" date="1997" name="Electrophoresis">
        <title>Comparing the predicted and observed properties of proteins encoded in the genome of Escherichia coli K-12.</title>
        <authorList>
            <person name="Link A.J."/>
            <person name="Robison K."/>
            <person name="Church G.M."/>
        </authorList>
    </citation>
    <scope>PROTEIN SEQUENCE OF 2-13</scope>
    <source>
        <strain>K12 / EMG2</strain>
    </source>
</reference>
<reference key="6">
    <citation type="journal article" date="1998" name="J. Mol. Biol.">
        <title>Protein identification with N and C-terminal sequence tags in proteome projects.</title>
        <authorList>
            <person name="Wilkins M.R."/>
            <person name="Gasteiger E."/>
            <person name="Tonella L."/>
            <person name="Ou K."/>
            <person name="Tyler M."/>
            <person name="Sanchez J.-C."/>
            <person name="Gooley A.A."/>
            <person name="Walsh B.J."/>
            <person name="Bairoch A."/>
            <person name="Appel R.D."/>
            <person name="Williams K.L."/>
            <person name="Hochstrasser D.F."/>
        </authorList>
    </citation>
    <scope>PROTEIN SEQUENCE OF 2-5</scope>
    <source>
        <strain>K12 / W3110 / ATCC 27325 / DSM 5911</strain>
    </source>
</reference>
<reference key="7">
    <citation type="journal article" date="1993" name="FEBS Lett.">
        <title>Identification of zinc-binding ligands in the class II fructose-1,6-bisphosphate aldolase of Escherichia coli.</title>
        <authorList>
            <person name="Berry A."/>
            <person name="Marshall K.E."/>
        </authorList>
    </citation>
    <scope>MUTAGENESIS OF HIS-108; HIS-111 AND CYS-112</scope>
</reference>
<reference key="8">
    <citation type="journal article" date="2000" name="Eur. J. Biochem.">
        <title>Exploring substrate binding and discrimination in fructose 1,6-bisphosphate and tagatose 1,6-bisphosphate aldolases.</title>
        <authorList>
            <person name="Zgiby S.M."/>
            <person name="Thomson G.J."/>
            <person name="Qamar S."/>
            <person name="Berry A."/>
        </authorList>
    </citation>
    <scope>FUNCTION</scope>
    <scope>CATALYTIC ACTIVITY</scope>
    <scope>SUBSTRATE SPECIFICITY</scope>
    <scope>KINETIC PARAMETERS</scope>
    <scope>REACTION MECHANISM</scope>
    <scope>MUTAGENESIS OF ASN-36; GLN-60; SER-62 AND LYS-326</scope>
    <source>
        <strain>K12 / MG1655 / ATCC 47076</strain>
    </source>
</reference>
<reference key="9">
    <citation type="journal article" date="2009" name="Mol. Cell. Proteomics">
        <title>Lysine acetylation is a highly abundant and evolutionarily conserved modification in Escherichia coli.</title>
        <authorList>
            <person name="Zhang J."/>
            <person name="Sprung R."/>
            <person name="Pei J."/>
            <person name="Tan X."/>
            <person name="Kim S."/>
            <person name="Zhu H."/>
            <person name="Liu C.F."/>
            <person name="Grishin N.V."/>
            <person name="Zhao Y."/>
        </authorList>
    </citation>
    <scope>ACETYLATION [LARGE SCALE ANALYSIS] AT LYS-9</scope>
    <scope>IDENTIFICATION BY MASS SPECTROMETRY</scope>
    <source>
        <strain>K12 / JW1106</strain>
        <strain>K12 / MG1655 / ATCC 47076</strain>
    </source>
</reference>
<reference key="10">
    <citation type="journal article" date="2009" name="Mol. Syst. Biol.">
        <title>Systematic phenome analysis of Escherichia coli multiple-knockout mutants reveals hidden reactions in central carbon metabolism.</title>
        <authorList>
            <person name="Nakahigashi K."/>
            <person name="Toya Y."/>
            <person name="Ishii N."/>
            <person name="Soga T."/>
            <person name="Hasegawa M."/>
            <person name="Watanabe H."/>
            <person name="Takai Y."/>
            <person name="Honma M."/>
            <person name="Mori H."/>
            <person name="Tomita M."/>
        </authorList>
    </citation>
    <scope>FUNCTION IN SEDOHEPTULOSE BISPHOSPHATE BYPASS PATHWAY</scope>
    <scope>CATALYTIC ACTIVITY</scope>
    <source>
        <strain>K12 / BW25113</strain>
    </source>
</reference>
<reference key="11">
    <citation type="journal article" date="2011" name="Mol. Cell. Proteomics">
        <title>The first identification of lysine malonylation substrates and its regulatory enzyme.</title>
        <authorList>
            <person name="Peng C."/>
            <person name="Lu Z."/>
            <person name="Xie Z."/>
            <person name="Cheng Z."/>
            <person name="Chen Y."/>
            <person name="Tan M."/>
            <person name="Luo H."/>
            <person name="Zhang Y."/>
            <person name="He W."/>
            <person name="Yang K."/>
            <person name="Zwaans B.M."/>
            <person name="Tishkoff D."/>
            <person name="Ho L."/>
            <person name="Lombard D."/>
            <person name="He T.C."/>
            <person name="Dai J."/>
            <person name="Verdin E."/>
            <person name="Ye Y."/>
            <person name="Zhao Y."/>
        </authorList>
    </citation>
    <scope>MALONYLATION AT LYS-9</scope>
    <source>
        <strain>K12</strain>
    </source>
</reference>
<reference key="12">
    <citation type="journal article" date="2011" name="Nat. Chem. Biol.">
        <title>Identification of lysine succinylation as a new post-translational modification.</title>
        <authorList>
            <person name="Zhang Z."/>
            <person name="Tan M."/>
            <person name="Xie Z."/>
            <person name="Dai L."/>
            <person name="Chen Y."/>
            <person name="Zhao Y."/>
        </authorList>
    </citation>
    <scope>SUCCINYLATION AT LYS-9; LYS-72; LYS-115; LYS-231; LYS-251; LYS-319; LYS-326 AND LYS-348</scope>
    <source>
        <strain>K12</strain>
    </source>
</reference>
<reference key="13">
    <citation type="journal article" date="1996" name="Nat. Struct. Biol.">
        <title>Novel active site in Escherichia coli fructose 1,6-bisphosphate aldolase.</title>
        <authorList>
            <person name="Blom N.S."/>
            <person name="Tetreault S."/>
            <person name="Coulombe R."/>
            <person name="Sygusch J."/>
        </authorList>
    </citation>
    <scope>X-RAY CRYSTALLOGRAPHY (1.67 ANGSTROMS) IN COMPLEX WITH ZINC</scope>
</reference>
<reference key="14">
    <citation type="journal article" date="1996" name="Structure">
        <title>The crystal structure of a class II fructose-1,6-bisphosphate aldolase shows a novel binuclear metal-binding active site embedded in a familiar fold.</title>
        <authorList>
            <person name="Cooper S.J."/>
            <person name="Leonard G.A."/>
            <person name="McSweeney S.M."/>
            <person name="Thompson A.W."/>
            <person name="Naismith J.H."/>
            <person name="Qamar S."/>
            <person name="Plater A."/>
            <person name="Berry A."/>
            <person name="Hunter W.N."/>
        </authorList>
    </citation>
    <scope>X-RAY CRYSTALLOGRAPHY (2.5 ANGSTROMS) IN COMPLEX WITH ZINC</scope>
</reference>
<reference key="15">
    <citation type="journal article" date="1999" name="J. Mol. Biol.">
        <title>The crystal structure of Escherichia coli class II fructose-1, 6-bisphosphate aldolase in complex with phosphoglycolohydroxamate reveals details of mechanism and specificity.</title>
        <authorList>
            <person name="Hall D.R."/>
            <person name="Leonard G.A."/>
            <person name="Reed C.D."/>
            <person name="Watt C.I."/>
            <person name="Berry A."/>
            <person name="Hunter W.N."/>
        </authorList>
    </citation>
    <scope>X-RAY CRYSTALLOGRAPHY (2.0 ANGSTROMS) IN COMPLEX WITH ZINC AND TRANSITION STATE ANALOG</scope>
    <scope>ACTIVE SITE</scope>
</reference>
<reference key="16">
    <citation type="journal article" date="2003" name="Acta Crystallogr. D">
        <title>The organization of divalent cations in the active site of cadmium Escherichia coli fructose-1,6-bisphosphate aldolase.</title>
        <authorList>
            <person name="Hall D.R."/>
            <person name="Kemp L.E."/>
            <person name="Leonard G.A."/>
            <person name="Marshall K."/>
            <person name="Berry A."/>
            <person name="Hunter W.N."/>
        </authorList>
    </citation>
    <scope>X-RAY CRYSTALLOGRAPHY (2.0 ANGSTROMS) IN COMPLEX WITH CADMIUM</scope>
    <scope>METAL BINDING SITES</scope>
</reference>